<keyword id="KW-0963">Cytoplasm</keyword>
<keyword id="KW-0329">Glyoxylate bypass</keyword>
<keyword id="KW-0460">Magnesium</keyword>
<keyword id="KW-0479">Metal-binding</keyword>
<keyword id="KW-0558">Oxidation</keyword>
<keyword id="KW-1185">Reference proteome</keyword>
<keyword id="KW-0808">Transferase</keyword>
<keyword id="KW-0816">Tricarboxylic acid cycle</keyword>
<gene>
    <name evidence="1" type="primary">glcB</name>
    <name type="ordered locus">RHE_CH00052</name>
</gene>
<reference key="1">
    <citation type="journal article" date="2006" name="Proc. Natl. Acad. Sci. U.S.A.">
        <title>The partitioned Rhizobium etli genome: genetic and metabolic redundancy in seven interacting replicons.</title>
        <authorList>
            <person name="Gonzalez V."/>
            <person name="Santamaria R.I."/>
            <person name="Bustos P."/>
            <person name="Hernandez-Gonzalez I."/>
            <person name="Medrano-Soto A."/>
            <person name="Moreno-Hagelsieb G."/>
            <person name="Janga S.C."/>
            <person name="Ramirez M.A."/>
            <person name="Jimenez-Jacinto V."/>
            <person name="Collado-Vides J."/>
            <person name="Davila G."/>
        </authorList>
    </citation>
    <scope>NUCLEOTIDE SEQUENCE [LARGE SCALE GENOMIC DNA]</scope>
    <source>
        <strain>ATCC 51251 / DSM 11541 / JCM 21823 / NBRC 15573 / CFN 42</strain>
    </source>
</reference>
<dbReference type="EC" id="2.3.3.9" evidence="1"/>
<dbReference type="EMBL" id="CP000133">
    <property type="protein sequence ID" value="ABC88885.1"/>
    <property type="molecule type" value="Genomic_DNA"/>
</dbReference>
<dbReference type="RefSeq" id="WP_011423456.1">
    <property type="nucleotide sequence ID" value="NC_007761.1"/>
</dbReference>
<dbReference type="SMR" id="Q2KE51"/>
<dbReference type="KEGG" id="ret:RHE_CH00052"/>
<dbReference type="eggNOG" id="COG2225">
    <property type="taxonomic scope" value="Bacteria"/>
</dbReference>
<dbReference type="HOGENOM" id="CLU_028446_1_0_5"/>
<dbReference type="OrthoDB" id="9762054at2"/>
<dbReference type="UniPathway" id="UPA00703">
    <property type="reaction ID" value="UER00720"/>
</dbReference>
<dbReference type="Proteomes" id="UP000001936">
    <property type="component" value="Chromosome"/>
</dbReference>
<dbReference type="GO" id="GO:0005829">
    <property type="term" value="C:cytosol"/>
    <property type="evidence" value="ECO:0007669"/>
    <property type="project" value="TreeGrafter"/>
</dbReference>
<dbReference type="GO" id="GO:0000287">
    <property type="term" value="F:magnesium ion binding"/>
    <property type="evidence" value="ECO:0007669"/>
    <property type="project" value="TreeGrafter"/>
</dbReference>
<dbReference type="GO" id="GO:0004474">
    <property type="term" value="F:malate synthase activity"/>
    <property type="evidence" value="ECO:0007669"/>
    <property type="project" value="UniProtKB-UniRule"/>
</dbReference>
<dbReference type="GO" id="GO:0009436">
    <property type="term" value="P:glyoxylate catabolic process"/>
    <property type="evidence" value="ECO:0007669"/>
    <property type="project" value="TreeGrafter"/>
</dbReference>
<dbReference type="GO" id="GO:0006097">
    <property type="term" value="P:glyoxylate cycle"/>
    <property type="evidence" value="ECO:0007669"/>
    <property type="project" value="UniProtKB-UniRule"/>
</dbReference>
<dbReference type="GO" id="GO:0006099">
    <property type="term" value="P:tricarboxylic acid cycle"/>
    <property type="evidence" value="ECO:0007669"/>
    <property type="project" value="UniProtKB-KW"/>
</dbReference>
<dbReference type="CDD" id="cd00728">
    <property type="entry name" value="malate_synt_G"/>
    <property type="match status" value="1"/>
</dbReference>
<dbReference type="FunFam" id="3.20.20.360:FF:000002">
    <property type="entry name" value="Malate synthase G"/>
    <property type="match status" value="1"/>
</dbReference>
<dbReference type="Gene3D" id="3.20.20.360">
    <property type="entry name" value="Malate synthase, domain 3"/>
    <property type="match status" value="2"/>
</dbReference>
<dbReference type="Gene3D" id="1.20.1220.12">
    <property type="entry name" value="Malate synthase, domain III"/>
    <property type="match status" value="1"/>
</dbReference>
<dbReference type="HAMAP" id="MF_00641">
    <property type="entry name" value="Malate_synth_G"/>
    <property type="match status" value="1"/>
</dbReference>
<dbReference type="InterPro" id="IPR044856">
    <property type="entry name" value="Malate_synth_C_sf"/>
</dbReference>
<dbReference type="InterPro" id="IPR011076">
    <property type="entry name" value="Malate_synth_sf"/>
</dbReference>
<dbReference type="InterPro" id="IPR001465">
    <property type="entry name" value="Malate_synthase_TIM"/>
</dbReference>
<dbReference type="InterPro" id="IPR006253">
    <property type="entry name" value="Malate_synthG"/>
</dbReference>
<dbReference type="InterPro" id="IPR048355">
    <property type="entry name" value="MS_C"/>
</dbReference>
<dbReference type="InterPro" id="IPR048356">
    <property type="entry name" value="MS_N"/>
</dbReference>
<dbReference type="InterPro" id="IPR046363">
    <property type="entry name" value="MS_N_TIM-barrel_dom"/>
</dbReference>
<dbReference type="InterPro" id="IPR048357">
    <property type="entry name" value="MSG_insertion"/>
</dbReference>
<dbReference type="NCBIfam" id="TIGR01345">
    <property type="entry name" value="malate_syn_G"/>
    <property type="match status" value="1"/>
</dbReference>
<dbReference type="NCBIfam" id="NF002825">
    <property type="entry name" value="PRK02999.1"/>
    <property type="match status" value="1"/>
</dbReference>
<dbReference type="PANTHER" id="PTHR42739">
    <property type="entry name" value="MALATE SYNTHASE G"/>
    <property type="match status" value="1"/>
</dbReference>
<dbReference type="PANTHER" id="PTHR42739:SF1">
    <property type="entry name" value="MALATE SYNTHASE G"/>
    <property type="match status" value="1"/>
</dbReference>
<dbReference type="Pfam" id="PF20659">
    <property type="entry name" value="MS_C"/>
    <property type="match status" value="1"/>
</dbReference>
<dbReference type="Pfam" id="PF20656">
    <property type="entry name" value="MS_N"/>
    <property type="match status" value="1"/>
</dbReference>
<dbReference type="Pfam" id="PF01274">
    <property type="entry name" value="MS_TIM-barrel"/>
    <property type="match status" value="1"/>
</dbReference>
<dbReference type="Pfam" id="PF20658">
    <property type="entry name" value="MSG_insertion"/>
    <property type="match status" value="1"/>
</dbReference>
<dbReference type="SUPFAM" id="SSF51645">
    <property type="entry name" value="Malate synthase G"/>
    <property type="match status" value="1"/>
</dbReference>
<protein>
    <recommendedName>
        <fullName evidence="1">Malate synthase G</fullName>
        <ecNumber evidence="1">2.3.3.9</ecNumber>
    </recommendedName>
</protein>
<sequence>MSRIDKNGLAIETILHDFLTQEVLPGLAIDADRFFADFSAIVHDLAPRNRALLVKRDELQTKIDDWYRQHGAPSDMDDYQSFLRSIGYLLPEGSDFQVSTANVDPEIASIAGPQLVVPVMNARYALNAANARWGSLYDALYGTDAIPENDGAEKGKGYNPKRGEKVIAWVRDFLDAAAPLQDSRWKDVGSFFVKDGMLVVRSVDGEQTMLGDGGHFAGYRGDAAAPAHILLKNNGIHIDIVIDPTTAIGKADPAHISDVWLESAITTIMDCEDSIAAVDAEDKVVVYRNWLGLMKGDLQEEVAKGGTTFLRKLNPDLDYTSPDGASFELHRRSLMLVRNVGHLMTNPAILDKDGNEVPEGIMDAVITGLIALYDIGPTGRKKNSRTGSMYVVKPKMHGPEEVAFAVEIFSRVEDALGMARNTIKMGIMDEERRTTINLKECIRAARERVVFINTGFLDRTGDEIHTSMEAGPMIRKGDMRQAAWISAYENWNVDIGLECGLSGHAQIGKGMWAMPDLMAAMLEQKIAHPKAGANTAWVPSPTAATLHATHYHRVNVAKVQQGLKDRARARLSDILSVPVAVRPNWTPEEIQRELDNNAQGILGYVVRWIDQGVGCSKVPDINNIGLMEDRATLRISAQHMANWLHHKVVTEAQIVETMKRMAAIVDRQNESDPAYRPMAGNFDDSIAFQAALDLVLKGREQPNGYTEPVLHRRRLELKAKQSA</sequence>
<comment type="function">
    <text evidence="1">Involved in the glycolate utilization. Catalyzes the condensation and subsequent hydrolysis of acetyl-coenzyme A (acetyl-CoA) and glyoxylate to form malate and CoA.</text>
</comment>
<comment type="catalytic activity">
    <reaction evidence="1">
        <text>glyoxylate + acetyl-CoA + H2O = (S)-malate + CoA + H(+)</text>
        <dbReference type="Rhea" id="RHEA:18181"/>
        <dbReference type="ChEBI" id="CHEBI:15377"/>
        <dbReference type="ChEBI" id="CHEBI:15378"/>
        <dbReference type="ChEBI" id="CHEBI:15589"/>
        <dbReference type="ChEBI" id="CHEBI:36655"/>
        <dbReference type="ChEBI" id="CHEBI:57287"/>
        <dbReference type="ChEBI" id="CHEBI:57288"/>
        <dbReference type="EC" id="2.3.3.9"/>
    </reaction>
</comment>
<comment type="cofactor">
    <cofactor evidence="1">
        <name>Mg(2+)</name>
        <dbReference type="ChEBI" id="CHEBI:18420"/>
    </cofactor>
</comment>
<comment type="pathway">
    <text evidence="1">Carbohydrate metabolism; glyoxylate cycle; (S)-malate from isocitrate: step 2/2.</text>
</comment>
<comment type="subunit">
    <text evidence="1">Monomer.</text>
</comment>
<comment type="subcellular location">
    <subcellularLocation>
        <location evidence="1">Cytoplasm</location>
    </subcellularLocation>
</comment>
<comment type="similarity">
    <text evidence="1">Belongs to the malate synthase family. GlcB subfamily.</text>
</comment>
<name>MASZ_RHIEC</name>
<organism>
    <name type="scientific">Rhizobium etli (strain ATCC 51251 / DSM 11541 / JCM 21823 / NBRC 15573 / CFN 42)</name>
    <dbReference type="NCBI Taxonomy" id="347834"/>
    <lineage>
        <taxon>Bacteria</taxon>
        <taxon>Pseudomonadati</taxon>
        <taxon>Pseudomonadota</taxon>
        <taxon>Alphaproteobacteria</taxon>
        <taxon>Hyphomicrobiales</taxon>
        <taxon>Rhizobiaceae</taxon>
        <taxon>Rhizobium/Agrobacterium group</taxon>
        <taxon>Rhizobium</taxon>
    </lineage>
</organism>
<proteinExistence type="inferred from homology"/>
<evidence type="ECO:0000255" key="1">
    <source>
        <dbReference type="HAMAP-Rule" id="MF_00641"/>
    </source>
</evidence>
<feature type="chain" id="PRO_1000056921" description="Malate synthase G">
    <location>
        <begin position="1"/>
        <end position="723"/>
    </location>
</feature>
<feature type="active site" description="Proton acceptor" evidence="1">
    <location>
        <position position="338"/>
    </location>
</feature>
<feature type="active site" description="Proton donor" evidence="1">
    <location>
        <position position="629"/>
    </location>
</feature>
<feature type="binding site" evidence="1">
    <location>
        <position position="116"/>
    </location>
    <ligand>
        <name>acetyl-CoA</name>
        <dbReference type="ChEBI" id="CHEBI:57288"/>
    </ligand>
</feature>
<feature type="binding site" evidence="1">
    <location>
        <begin position="123"/>
        <end position="124"/>
    </location>
    <ligand>
        <name>acetyl-CoA</name>
        <dbReference type="ChEBI" id="CHEBI:57288"/>
    </ligand>
</feature>
<feature type="binding site" evidence="1">
    <location>
        <position position="274"/>
    </location>
    <ligand>
        <name>acetyl-CoA</name>
        <dbReference type="ChEBI" id="CHEBI:57288"/>
    </ligand>
</feature>
<feature type="binding site" evidence="1">
    <location>
        <position position="311"/>
    </location>
    <ligand>
        <name>acetyl-CoA</name>
        <dbReference type="ChEBI" id="CHEBI:57288"/>
    </ligand>
</feature>
<feature type="binding site" evidence="1">
    <location>
        <position position="338"/>
    </location>
    <ligand>
        <name>glyoxylate</name>
        <dbReference type="ChEBI" id="CHEBI:36655"/>
    </ligand>
</feature>
<feature type="binding site" evidence="1">
    <location>
        <position position="430"/>
    </location>
    <ligand>
        <name>glyoxylate</name>
        <dbReference type="ChEBI" id="CHEBI:36655"/>
    </ligand>
</feature>
<feature type="binding site" evidence="1">
    <location>
        <position position="430"/>
    </location>
    <ligand>
        <name>Mg(2+)</name>
        <dbReference type="ChEBI" id="CHEBI:18420"/>
    </ligand>
</feature>
<feature type="binding site" evidence="1">
    <location>
        <begin position="455"/>
        <end position="458"/>
    </location>
    <ligand>
        <name>glyoxylate</name>
        <dbReference type="ChEBI" id="CHEBI:36655"/>
    </ligand>
</feature>
<feature type="binding site" evidence="1">
    <location>
        <position position="458"/>
    </location>
    <ligand>
        <name>Mg(2+)</name>
        <dbReference type="ChEBI" id="CHEBI:18420"/>
    </ligand>
</feature>
<feature type="binding site" evidence="1">
    <location>
        <position position="539"/>
    </location>
    <ligand>
        <name>acetyl-CoA</name>
        <dbReference type="ChEBI" id="CHEBI:57288"/>
    </ligand>
</feature>
<feature type="modified residue" description="Cysteine sulfenic acid (-SOH)" evidence="1">
    <location>
        <position position="615"/>
    </location>
</feature>
<accession>Q2KE51</accession>